<sequence>MTVTPRTGSRIEELLARSGRFFIPGEISADLRTVTRRGGRDGDVFYRDRWSHDKVVRSTHGVNCTGSCSWKIYVKDDIITWETQETDYPSVGPDRPEYEPRGCPRGAAFSWYTYSPTRVRHPYARGVLVEMYREAKARLGDPVAAWADIQADPRRRRRYQRARGKGGLVRVSWAEATEMIAAAHVHTISTYGPDRVAGFSPIPAMSMVSHAAGSRFVELIGGVMTSFYDWYADLPVASPQVFGDQTDVPESGDWWDVVWQCASVLLTYPNSRQLGTAEELLAHIDGPAADLLGRTVSELRRADPLTAATRYVDTFDLRGRATLYLTYWTAGDTRNRGREMLAFAQTYRSTDVAPPRGETPDFLPVVLEFAATVDPEAGRRLLSGYRVPIAALCNALTEAALPYAHTVAAVCRTGDMMGELFWTVVPYVTMTIVAVGSWWRYRYDKFGWTTRSSQLYESRLLRIASPMFHFGILVVIVGHGIGLVIPQSWTQAAGLSEGAYHVQAVVLGSIAGITTLAGVTLLIYRRRTRGPVFMATTVNDKVMYLVLVAAIVAGLGATALGSGVVGEAYNYRETVSVWFRSVWVLQPRGDLMAEAPLYYQIHVLIGLALFALWPFTRLVHAFSAPIGYLFRPYIIYRSREELVLTRPRRRGW</sequence>
<reference key="1">
    <citation type="journal article" date="2002" name="J. Bacteriol.">
        <title>Whole-genome comparison of Mycobacterium tuberculosis clinical and laboratory strains.</title>
        <authorList>
            <person name="Fleischmann R.D."/>
            <person name="Alland D."/>
            <person name="Eisen J.A."/>
            <person name="Carpenter L."/>
            <person name="White O."/>
            <person name="Peterson J.D."/>
            <person name="DeBoy R.T."/>
            <person name="Dodson R.J."/>
            <person name="Gwinn M.L."/>
            <person name="Haft D.H."/>
            <person name="Hickey E.K."/>
            <person name="Kolonay J.F."/>
            <person name="Nelson W.C."/>
            <person name="Umayam L.A."/>
            <person name="Ermolaeva M.D."/>
            <person name="Salzberg S.L."/>
            <person name="Delcher A."/>
            <person name="Utterback T.R."/>
            <person name="Weidman J.F."/>
            <person name="Khouri H.M."/>
            <person name="Gill J."/>
            <person name="Mikula A."/>
            <person name="Bishai W."/>
            <person name="Jacobs W.R. Jr."/>
            <person name="Venter J.C."/>
            <person name="Fraser C.M."/>
        </authorList>
    </citation>
    <scope>NUCLEOTIDE SEQUENCE [LARGE SCALE GENOMIC DNA]</scope>
    <source>
        <strain>CDC 1551 / Oshkosh</strain>
    </source>
</reference>
<reference key="2">
    <citation type="journal article" date="2003" name="J. Exp. Med.">
        <title>Inhibition of respiration by nitric oxide induces a Mycobacterium tuberculosis dormancy program.</title>
        <authorList>
            <person name="Voskuil M.I."/>
            <person name="Schnappinger D."/>
            <person name="Visconti K.C."/>
            <person name="Harrell M.I."/>
            <person name="Dolganov G.M."/>
            <person name="Sherman D.R."/>
            <person name="Schoolnik G.K."/>
        </authorList>
    </citation>
    <scope>INDUCTION BY NITRIC OXIDE (NO) AND BY HYPOXIA</scope>
    <scope>DORMANCY REGULON</scope>
    <source>
        <strain>CDC 1551 / Oshkosh</strain>
    </source>
</reference>
<name>NARX_MYCTO</name>
<organism>
    <name type="scientific">Mycobacterium tuberculosis (strain CDC 1551 / Oshkosh)</name>
    <dbReference type="NCBI Taxonomy" id="83331"/>
    <lineage>
        <taxon>Bacteria</taxon>
        <taxon>Bacillati</taxon>
        <taxon>Actinomycetota</taxon>
        <taxon>Actinomycetes</taxon>
        <taxon>Mycobacteriales</taxon>
        <taxon>Mycobacteriaceae</taxon>
        <taxon>Mycobacterium</taxon>
        <taxon>Mycobacterium tuberculosis complex</taxon>
    </lineage>
</organism>
<gene>
    <name type="primary">narX</name>
    <name type="ordered locus">MT1778</name>
</gene>
<proteinExistence type="evidence at transcript level"/>
<dbReference type="EMBL" id="AE000516">
    <property type="protein sequence ID" value="AAK46051.1"/>
    <property type="molecule type" value="Genomic_DNA"/>
</dbReference>
<dbReference type="PIR" id="C70688">
    <property type="entry name" value="C70688"/>
</dbReference>
<dbReference type="SMR" id="P9WJQ0"/>
<dbReference type="KEGG" id="mtc:MT1778"/>
<dbReference type="PATRIC" id="fig|83331.31.peg.1908"/>
<dbReference type="HOGENOM" id="CLU_027863_0_0_11"/>
<dbReference type="Proteomes" id="UP000001020">
    <property type="component" value="Chromosome"/>
</dbReference>
<dbReference type="GO" id="GO:0009325">
    <property type="term" value="C:nitrate reductase complex"/>
    <property type="evidence" value="ECO:0007669"/>
    <property type="project" value="InterPro"/>
</dbReference>
<dbReference type="GO" id="GO:0005886">
    <property type="term" value="C:plasma membrane"/>
    <property type="evidence" value="ECO:0007669"/>
    <property type="project" value="UniProtKB-SubCell"/>
</dbReference>
<dbReference type="GO" id="GO:0051539">
    <property type="term" value="F:4 iron, 4 sulfur cluster binding"/>
    <property type="evidence" value="ECO:0007669"/>
    <property type="project" value="UniProtKB-KW"/>
</dbReference>
<dbReference type="GO" id="GO:0009055">
    <property type="term" value="F:electron transfer activity"/>
    <property type="evidence" value="ECO:0007669"/>
    <property type="project" value="TreeGrafter"/>
</dbReference>
<dbReference type="GO" id="GO:0020037">
    <property type="term" value="F:heme binding"/>
    <property type="evidence" value="ECO:0007669"/>
    <property type="project" value="TreeGrafter"/>
</dbReference>
<dbReference type="GO" id="GO:0046872">
    <property type="term" value="F:metal ion binding"/>
    <property type="evidence" value="ECO:0007669"/>
    <property type="project" value="UniProtKB-KW"/>
</dbReference>
<dbReference type="GO" id="GO:0008940">
    <property type="term" value="F:nitrate reductase activity"/>
    <property type="evidence" value="ECO:0007669"/>
    <property type="project" value="InterPro"/>
</dbReference>
<dbReference type="GO" id="GO:0051082">
    <property type="term" value="F:unfolded protein binding"/>
    <property type="evidence" value="ECO:0007669"/>
    <property type="project" value="InterPro"/>
</dbReference>
<dbReference type="GO" id="GO:0019645">
    <property type="term" value="P:anaerobic electron transport chain"/>
    <property type="evidence" value="ECO:0007669"/>
    <property type="project" value="TreeGrafter"/>
</dbReference>
<dbReference type="GO" id="GO:0051131">
    <property type="term" value="P:chaperone-mediated protein complex assembly"/>
    <property type="evidence" value="ECO:0007669"/>
    <property type="project" value="InterPro"/>
</dbReference>
<dbReference type="GO" id="GO:0042128">
    <property type="term" value="P:nitrate assimilation"/>
    <property type="evidence" value="ECO:0007669"/>
    <property type="project" value="UniProtKB-KW"/>
</dbReference>
<dbReference type="FunFam" id="1.20.950.20:FF:000001">
    <property type="entry name" value="Respiratory nitrate reductase subunit gamma"/>
    <property type="match status" value="1"/>
</dbReference>
<dbReference type="Gene3D" id="3.40.50.12440">
    <property type="match status" value="1"/>
</dbReference>
<dbReference type="Gene3D" id="1.20.950.20">
    <property type="entry name" value="Transmembrane di-heme cytochromes, Chain C"/>
    <property type="match status" value="1"/>
</dbReference>
<dbReference type="InterPro" id="IPR020945">
    <property type="entry name" value="DMSO/NO3_reduct_chaperone"/>
</dbReference>
<dbReference type="InterPro" id="IPR051936">
    <property type="entry name" value="Heme-iron_electron_transfer"/>
</dbReference>
<dbReference type="InterPro" id="IPR006656">
    <property type="entry name" value="Mopterin_OxRdtase"/>
</dbReference>
<dbReference type="InterPro" id="IPR006963">
    <property type="entry name" value="Mopterin_OxRdtase_4Fe-4S_dom"/>
</dbReference>
<dbReference type="InterPro" id="IPR027467">
    <property type="entry name" value="MopterinOxRdtase_cofactor_BS"/>
</dbReference>
<dbReference type="InterPro" id="IPR023234">
    <property type="entry name" value="NarG-like_domain"/>
</dbReference>
<dbReference type="InterPro" id="IPR036197">
    <property type="entry name" value="NarG-like_sf"/>
</dbReference>
<dbReference type="InterPro" id="IPR003816">
    <property type="entry name" value="Nitrate_red_gam"/>
</dbReference>
<dbReference type="InterPro" id="IPR003765">
    <property type="entry name" value="NO3_reductase_chaperone_NarJ"/>
</dbReference>
<dbReference type="InterPro" id="IPR036411">
    <property type="entry name" value="TorD-like_sf"/>
</dbReference>
<dbReference type="NCBIfam" id="TIGR00351">
    <property type="entry name" value="narI"/>
    <property type="match status" value="1"/>
</dbReference>
<dbReference type="NCBIfam" id="TIGR00684">
    <property type="entry name" value="narJ"/>
    <property type="match status" value="1"/>
</dbReference>
<dbReference type="PANTHER" id="PTHR30598">
    <property type="entry name" value="NITRATE REDUCTASE PRIVATE CHAPERONE, REDOX ENZYME MATURATION PROTEIN REMP FAMILY"/>
    <property type="match status" value="1"/>
</dbReference>
<dbReference type="PANTHER" id="PTHR30598:SF3">
    <property type="entry name" value="RESPIRATORY NITRATE REDUCTASE 1 GAMMA CHAIN"/>
    <property type="match status" value="1"/>
</dbReference>
<dbReference type="Pfam" id="PF00384">
    <property type="entry name" value="Molybdopterin"/>
    <property type="match status" value="1"/>
</dbReference>
<dbReference type="Pfam" id="PF02613">
    <property type="entry name" value="Nitrate_red_del"/>
    <property type="match status" value="1"/>
</dbReference>
<dbReference type="Pfam" id="PF02665">
    <property type="entry name" value="Nitrate_red_gam"/>
    <property type="match status" value="1"/>
</dbReference>
<dbReference type="SMART" id="SM00926">
    <property type="entry name" value="Molybdop_Fe4S4"/>
    <property type="match status" value="1"/>
</dbReference>
<dbReference type="SUPFAM" id="SSF53706">
    <property type="entry name" value="Formate dehydrogenase/DMSO reductase, domains 1-3"/>
    <property type="match status" value="1"/>
</dbReference>
<dbReference type="SUPFAM" id="SSF103501">
    <property type="entry name" value="Respiratory nitrate reductase 1 gamma chain"/>
    <property type="match status" value="1"/>
</dbReference>
<dbReference type="SUPFAM" id="SSF89155">
    <property type="entry name" value="TorD-like"/>
    <property type="match status" value="1"/>
</dbReference>
<dbReference type="PROSITE" id="PS51669">
    <property type="entry name" value="4FE4S_MOW_BIS_MGD"/>
    <property type="match status" value="1"/>
</dbReference>
<dbReference type="PROSITE" id="PS00551">
    <property type="entry name" value="MOLYBDOPTERIN_PROK_1"/>
    <property type="match status" value="1"/>
</dbReference>
<feature type="chain" id="PRO_0000427791" description="Nitrate reductase-like protein NarX">
    <location>
        <begin position="1"/>
        <end position="652"/>
    </location>
</feature>
<feature type="transmembrane region" description="Helical" evidence="3">
    <location>
        <begin position="416"/>
        <end position="436"/>
    </location>
</feature>
<feature type="transmembrane region" description="Helical" evidence="3">
    <location>
        <begin position="466"/>
        <end position="486"/>
    </location>
</feature>
<feature type="transmembrane region" description="Helical" evidence="3">
    <location>
        <begin position="504"/>
        <end position="524"/>
    </location>
</feature>
<feature type="transmembrane region" description="Helical" evidence="3">
    <location>
        <begin position="545"/>
        <end position="565"/>
    </location>
</feature>
<feature type="transmembrane region" description="Helical" evidence="3">
    <location>
        <begin position="595"/>
        <end position="615"/>
    </location>
</feature>
<feature type="domain" description="4Fe-4S Mo/W bis-MGD-type" evidence="4">
    <location>
        <begin position="53"/>
        <end position="117"/>
    </location>
</feature>
<feature type="region of interest" description="Nitrate reductase alpha subunit">
    <location>
        <begin position="1"/>
        <end position="251"/>
    </location>
</feature>
<feature type="region of interest" description="Nitrate reductase delta subunit">
    <location>
        <begin position="258"/>
        <end position="415"/>
    </location>
</feature>
<feature type="region of interest" description="Nitrate reductase gamma subunit">
    <location>
        <begin position="416"/>
        <end position="652"/>
    </location>
</feature>
<feature type="binding site" evidence="4">
    <location>
        <position position="60"/>
    </location>
    <ligand>
        <name>[4Fe-4S] cluster</name>
        <dbReference type="ChEBI" id="CHEBI:49883"/>
    </ligand>
</feature>
<feature type="binding site" evidence="4">
    <location>
        <position position="64"/>
    </location>
    <ligand>
        <name>[4Fe-4S] cluster</name>
        <dbReference type="ChEBI" id="CHEBI:49883"/>
    </ligand>
</feature>
<feature type="binding site" evidence="4">
    <location>
        <position position="68"/>
    </location>
    <ligand>
        <name>[4Fe-4S] cluster</name>
        <dbReference type="ChEBI" id="CHEBI:49883"/>
    </ligand>
</feature>
<feature type="binding site" evidence="4">
    <location>
        <position position="103"/>
    </location>
    <ligand>
        <name>[4Fe-4S] cluster</name>
        <dbReference type="ChEBI" id="CHEBI:49883"/>
    </ligand>
</feature>
<feature type="binding site" evidence="1">
    <location>
        <position position="233"/>
    </location>
    <ligand>
        <name>Mo-bis(molybdopterin guanine dinucleotide)</name>
        <dbReference type="ChEBI" id="CHEBI:60539"/>
    </ligand>
    <ligandPart>
        <name>Mo</name>
        <dbReference type="ChEBI" id="CHEBI:28685"/>
    </ligandPart>
</feature>
<feature type="binding site" description="axial binding residue" evidence="1">
    <location>
        <position position="469"/>
    </location>
    <ligand>
        <name>heme b</name>
        <dbReference type="ChEBI" id="CHEBI:60344"/>
        <label>1</label>
    </ligand>
    <ligandPart>
        <name>Fe</name>
        <dbReference type="ChEBI" id="CHEBI:18248"/>
    </ligandPart>
</feature>
<feature type="binding site" description="axial binding residue" evidence="1">
    <location>
        <position position="479"/>
    </location>
    <ligand>
        <name>heme b</name>
        <dbReference type="ChEBI" id="CHEBI:60344"/>
        <label>2</label>
    </ligand>
    <ligandPart>
        <name>Fe</name>
        <dbReference type="ChEBI" id="CHEBI:18248"/>
    </ligandPart>
</feature>
<feature type="binding site" description="axial binding residue" evidence="1">
    <location>
        <position position="602"/>
    </location>
    <ligand>
        <name>heme b</name>
        <dbReference type="ChEBI" id="CHEBI:60344"/>
        <label>2</label>
    </ligand>
    <ligandPart>
        <name>Fe</name>
        <dbReference type="ChEBI" id="CHEBI:18248"/>
    </ligandPart>
</feature>
<feature type="binding site" description="axial binding residue" evidence="1">
    <location>
        <position position="620"/>
    </location>
    <ligand>
        <name>heme b</name>
        <dbReference type="ChEBI" id="CHEBI:60344"/>
        <label>1</label>
    </ligand>
    <ligandPart>
        <name>Fe</name>
        <dbReference type="ChEBI" id="CHEBI:18248"/>
    </ligandPart>
</feature>
<keyword id="KW-0004">4Fe-4S</keyword>
<keyword id="KW-1003">Cell membrane</keyword>
<keyword id="KW-0249">Electron transport</keyword>
<keyword id="KW-0349">Heme</keyword>
<keyword id="KW-0408">Iron</keyword>
<keyword id="KW-0411">Iron-sulfur</keyword>
<keyword id="KW-0472">Membrane</keyword>
<keyword id="KW-0479">Metal-binding</keyword>
<keyword id="KW-0500">Molybdenum</keyword>
<keyword id="KW-0534">Nitrate assimilation</keyword>
<keyword id="KW-0560">Oxidoreductase</keyword>
<keyword id="KW-1185">Reference proteome</keyword>
<keyword id="KW-0812">Transmembrane</keyword>
<keyword id="KW-1133">Transmembrane helix</keyword>
<keyword id="KW-0813">Transport</keyword>
<accession>P9WJQ0</accession>
<accession>L0T7S1</accession>
<accession>P71994</accession>
<accession>Q7D821</accession>
<protein>
    <recommendedName>
        <fullName>Nitrate reductase-like protein NarX</fullName>
    </recommendedName>
</protein>
<evidence type="ECO:0000250" key="1"/>
<evidence type="ECO:0000250" key="2">
    <source>
        <dbReference type="UniProtKB" id="P9WJQ1"/>
    </source>
</evidence>
<evidence type="ECO:0000255" key="3"/>
<evidence type="ECO:0000255" key="4">
    <source>
        <dbReference type="PROSITE-ProRule" id="PRU01004"/>
    </source>
</evidence>
<evidence type="ECO:0000269" key="5">
    <source>
    </source>
</evidence>
<evidence type="ECO:0000305" key="6"/>
<comment type="function">
    <text evidence="2">Does not seem to have nitrate reductase activity.</text>
</comment>
<comment type="cofactor">
    <cofactor evidence="6">
        <name>[4Fe-4S] cluster</name>
        <dbReference type="ChEBI" id="CHEBI:49883"/>
    </cofactor>
    <text evidence="6">Binds 1 [4Fe-4S] cluster per subunit.</text>
</comment>
<comment type="cofactor">
    <cofactor evidence="1">
        <name>Mo-bis(molybdopterin guanine dinucleotide)</name>
        <dbReference type="ChEBI" id="CHEBI:60539"/>
    </cofactor>
    <text evidence="1">Binds 1 molybdenum-bis(molybdopterin guanine dinucleotide) (Mo-bis-MGD) cofactor per subunit.</text>
</comment>
<comment type="cofactor">
    <cofactor evidence="6">
        <name>heme b</name>
        <dbReference type="ChEBI" id="CHEBI:60344"/>
    </cofactor>
    <text evidence="6">Binds 2 heme b groups per subunit. Heme 1 is located at the cytoplasmic interface, heme 2 is located at the extracellular interface. Electrons are transferred from the extracellular to the cytoplasmic heme.</text>
</comment>
<comment type="subcellular location">
    <subcellularLocation>
        <location evidence="6">Cell membrane</location>
        <topology evidence="6">Multi-pass membrane protein</topology>
    </subcellularLocation>
</comment>
<comment type="induction">
    <text evidence="5">A member of the dormancy regulon. Induced in response to reduced oxygen tension (hypoxia) and low levels of nitric oxide (NO).</text>
</comment>
<comment type="similarity">
    <text evidence="6">In the N-terminal section; belongs to the nitrate reductase alpha subunit family.</text>
</comment>
<comment type="similarity">
    <text evidence="6">In the central section; belongs to the NarJ/NarW family.</text>
</comment>
<comment type="similarity">
    <text evidence="6">In the C-terminal section; belongs to the nitrate reductase gamma subunit family.</text>
</comment>